<evidence type="ECO:0000255" key="1">
    <source>
        <dbReference type="PROSITE-ProRule" id="PRU00319"/>
    </source>
</evidence>
<gene>
    <name type="ordered locus">PYRAB01370</name>
    <name type="ORF">PAB2257</name>
</gene>
<dbReference type="EMBL" id="AJ248283">
    <property type="protein sequence ID" value="CAB49061.1"/>
    <property type="molecule type" value="Genomic_DNA"/>
</dbReference>
<dbReference type="EMBL" id="HE613800">
    <property type="protein sequence ID" value="CCE69513.1"/>
    <property type="molecule type" value="Genomic_DNA"/>
</dbReference>
<dbReference type="PIR" id="F75201">
    <property type="entry name" value="F75201"/>
</dbReference>
<dbReference type="SMR" id="Q9V2D7"/>
<dbReference type="STRING" id="272844.PAB2257"/>
<dbReference type="KEGG" id="pab:PAB2257"/>
<dbReference type="PATRIC" id="fig|272844.11.peg.149"/>
<dbReference type="eggNOG" id="arCOG01580">
    <property type="taxonomic scope" value="Archaea"/>
</dbReference>
<dbReference type="HOGENOM" id="CLU_091233_5_4_2"/>
<dbReference type="OrthoDB" id="6762at2157"/>
<dbReference type="PhylomeDB" id="Q9V2D7"/>
<dbReference type="Proteomes" id="UP000000810">
    <property type="component" value="Chromosome"/>
</dbReference>
<dbReference type="Proteomes" id="UP000009139">
    <property type="component" value="Chromosome"/>
</dbReference>
<dbReference type="GO" id="GO:0005829">
    <property type="term" value="C:cytosol"/>
    <property type="evidence" value="ECO:0007669"/>
    <property type="project" value="TreeGrafter"/>
</dbReference>
<dbReference type="GO" id="GO:0043565">
    <property type="term" value="F:sequence-specific DNA binding"/>
    <property type="evidence" value="ECO:0007669"/>
    <property type="project" value="InterPro"/>
</dbReference>
<dbReference type="GO" id="GO:0043200">
    <property type="term" value="P:response to amino acid"/>
    <property type="evidence" value="ECO:0007669"/>
    <property type="project" value="TreeGrafter"/>
</dbReference>
<dbReference type="CDD" id="cd00090">
    <property type="entry name" value="HTH_ARSR"/>
    <property type="match status" value="1"/>
</dbReference>
<dbReference type="FunFam" id="1.10.10.10:FF:000083">
    <property type="entry name" value="AsnC family transcriptional regulator"/>
    <property type="match status" value="1"/>
</dbReference>
<dbReference type="FunFam" id="3.30.70.920:FF:000038">
    <property type="entry name" value="Uncharacterized HTH-type transcriptional regulator PH0140"/>
    <property type="match status" value="1"/>
</dbReference>
<dbReference type="Gene3D" id="3.30.70.920">
    <property type="match status" value="1"/>
</dbReference>
<dbReference type="Gene3D" id="1.10.10.10">
    <property type="entry name" value="Winged helix-like DNA-binding domain superfamily/Winged helix DNA-binding domain"/>
    <property type="match status" value="1"/>
</dbReference>
<dbReference type="InterPro" id="IPR011991">
    <property type="entry name" value="ArsR-like_HTH"/>
</dbReference>
<dbReference type="InterPro" id="IPR000485">
    <property type="entry name" value="AsnC-type_HTH_dom"/>
</dbReference>
<dbReference type="InterPro" id="IPR011008">
    <property type="entry name" value="Dimeric_a/b-barrel"/>
</dbReference>
<dbReference type="InterPro" id="IPR019888">
    <property type="entry name" value="Tscrpt_reg_AsnC-like"/>
</dbReference>
<dbReference type="InterPro" id="IPR019887">
    <property type="entry name" value="Tscrpt_reg_AsnC/Lrp_C"/>
</dbReference>
<dbReference type="InterPro" id="IPR036388">
    <property type="entry name" value="WH-like_DNA-bd_sf"/>
</dbReference>
<dbReference type="InterPro" id="IPR036390">
    <property type="entry name" value="WH_DNA-bd_sf"/>
</dbReference>
<dbReference type="PANTHER" id="PTHR30154">
    <property type="entry name" value="LEUCINE-RESPONSIVE REGULATORY PROTEIN"/>
    <property type="match status" value="1"/>
</dbReference>
<dbReference type="PANTHER" id="PTHR30154:SF34">
    <property type="entry name" value="TRANSCRIPTIONAL REGULATOR AZLB"/>
    <property type="match status" value="1"/>
</dbReference>
<dbReference type="Pfam" id="PF01037">
    <property type="entry name" value="AsnC_trans_reg"/>
    <property type="match status" value="1"/>
</dbReference>
<dbReference type="Pfam" id="PF13412">
    <property type="entry name" value="HTH_24"/>
    <property type="match status" value="1"/>
</dbReference>
<dbReference type="PRINTS" id="PR00033">
    <property type="entry name" value="HTHASNC"/>
</dbReference>
<dbReference type="SMART" id="SM00344">
    <property type="entry name" value="HTH_ASNC"/>
    <property type="match status" value="1"/>
</dbReference>
<dbReference type="SUPFAM" id="SSF54909">
    <property type="entry name" value="Dimeric alpha+beta barrel"/>
    <property type="match status" value="1"/>
</dbReference>
<dbReference type="SUPFAM" id="SSF46785">
    <property type="entry name" value="Winged helix' DNA-binding domain"/>
    <property type="match status" value="1"/>
</dbReference>
<dbReference type="PROSITE" id="PS50956">
    <property type="entry name" value="HTH_ASNC_2"/>
    <property type="match status" value="1"/>
</dbReference>
<organism>
    <name type="scientific">Pyrococcus abyssi (strain GE5 / Orsay)</name>
    <dbReference type="NCBI Taxonomy" id="272844"/>
    <lineage>
        <taxon>Archaea</taxon>
        <taxon>Methanobacteriati</taxon>
        <taxon>Methanobacteriota</taxon>
        <taxon>Thermococci</taxon>
        <taxon>Thermococcales</taxon>
        <taxon>Thermococcaceae</taxon>
        <taxon>Pyrococcus</taxon>
    </lineage>
</organism>
<feature type="chain" id="PRO_0000111760" description="Uncharacterized HTH-type transcriptional regulator PYRAB01370">
    <location>
        <begin position="1"/>
        <end position="158"/>
    </location>
</feature>
<feature type="domain" description="HTH asnC-type" evidence="1">
    <location>
        <begin position="12"/>
        <end position="73"/>
    </location>
</feature>
<feature type="DNA-binding region" description="H-T-H motif" evidence="1">
    <location>
        <begin position="31"/>
        <end position="50"/>
    </location>
</feature>
<proteinExistence type="predicted"/>
<reference key="1">
    <citation type="journal article" date="2003" name="Mol. Microbiol.">
        <title>An integrated analysis of the genome of the hyperthermophilic archaeon Pyrococcus abyssi.</title>
        <authorList>
            <person name="Cohen G.N."/>
            <person name="Barbe V."/>
            <person name="Flament D."/>
            <person name="Galperin M."/>
            <person name="Heilig R."/>
            <person name="Lecompte O."/>
            <person name="Poch O."/>
            <person name="Prieur D."/>
            <person name="Querellou J."/>
            <person name="Ripp R."/>
            <person name="Thierry J.-C."/>
            <person name="Van der Oost J."/>
            <person name="Weissenbach J."/>
            <person name="Zivanovic Y."/>
            <person name="Forterre P."/>
        </authorList>
    </citation>
    <scope>NUCLEOTIDE SEQUENCE [LARGE SCALE GENOMIC DNA]</scope>
    <source>
        <strain>GE5 / Orsay</strain>
    </source>
</reference>
<reference key="2">
    <citation type="journal article" date="2012" name="Curr. Microbiol.">
        <title>Re-annotation of two hyperthermophilic archaea Pyrococcus abyssi GE5 and Pyrococcus furiosus DSM 3638.</title>
        <authorList>
            <person name="Gao J."/>
            <person name="Wang J."/>
        </authorList>
    </citation>
    <scope>GENOME REANNOTATION</scope>
    <source>
        <strain>GE5 / Orsay</strain>
    </source>
</reference>
<sequence>MIRVAHSRKVQLDEIDRAILRLLQEDGRMSYSEISRRINVPESTVRARVNRLIREGVIRKFAALINPFKAGYEIVAFIAIDAEPAKVRQVVEELAKLPEVDVLGIVTGAHDIFMQVTVRDLQELERFILEKMAKIDGIRSTETSILTSVKKWGYARVF</sequence>
<keyword id="KW-0238">DNA-binding</keyword>
<keyword id="KW-0804">Transcription</keyword>
<keyword id="KW-0805">Transcription regulation</keyword>
<name>REG3_PYRAB</name>
<accession>Q9V2D7</accession>
<accession>G8ZFX2</accession>
<protein>
    <recommendedName>
        <fullName>Uncharacterized HTH-type transcriptional regulator PYRAB01370</fullName>
    </recommendedName>
</protein>